<sequence length="624" mass="71462">MRLLFIHADEMSFEARQKTKIAEEEPPIKEAEVEDCLVVFAAVQEADEENPKAIAEAAVEEIEDVAGELKADRIVLYPYAHLADDLASPDVAVEVLKRMEGLLKERGYEVVRAPFGWYKAFRLACKGHPLSELSRTVTPEAAEEAEEEKIESEFLVYMDGELIPVEEVDLSELPEDFRHLVMHELGEERETGDEEPAHVKLMREKEICDHEPAADVGHVRWYPKGHVVRRCLAEYVENLMADLGAAVVETPVMYDLSEDAIREHADKFGERQYRIRAGNRALMLRYAACFGAFRLLADTTLSRRHLPLKIYELSQSFRLEQSGEVVGLKRLRAFTMPDLHTVCADMDEAVEEFLEQAKLCLEVGLDLGLEYEVVFRTTEKFLKERKEVLEELAEAMEKAYGDAKPVLVEVLPERKHYWECKVDFAFIDSLGRPIENPTVQIDVESGRRFGITYADESGDERHPVILHCSPTGSLERVICAILEGQYKRFEQEGKLPTLPTWLSPVQARVIPVSEKVLEEAEKVFEELKSEGFRVDLDDRDEPVGRKIRDAGEEWVPYVIVIGEEEVKKGTLSVTIREESTLKEQRREEMTLEELVERLERETEGKPRVPLTIPDRLSRRPRFGR</sequence>
<keyword id="KW-0030">Aminoacyl-tRNA synthetase</keyword>
<keyword id="KW-0067">ATP-binding</keyword>
<keyword id="KW-0963">Cytoplasm</keyword>
<keyword id="KW-0436">Ligase</keyword>
<keyword id="KW-0479">Metal-binding</keyword>
<keyword id="KW-0547">Nucleotide-binding</keyword>
<keyword id="KW-0648">Protein biosynthesis</keyword>
<keyword id="KW-1185">Reference proteome</keyword>
<keyword id="KW-0694">RNA-binding</keyword>
<keyword id="KW-0820">tRNA-binding</keyword>
<keyword id="KW-0862">Zinc</keyword>
<accession>Q8TXW5</accession>
<organism>
    <name type="scientific">Methanopyrus kandleri (strain AV19 / DSM 6324 / JCM 9639 / NBRC 100938)</name>
    <dbReference type="NCBI Taxonomy" id="190192"/>
    <lineage>
        <taxon>Archaea</taxon>
        <taxon>Methanobacteriati</taxon>
        <taxon>Methanobacteriota</taxon>
        <taxon>Methanomada group</taxon>
        <taxon>Methanopyri</taxon>
        <taxon>Methanopyrales</taxon>
        <taxon>Methanopyraceae</taxon>
        <taxon>Methanopyrus</taxon>
    </lineage>
</organism>
<protein>
    <recommendedName>
        <fullName evidence="1">Threonine--tRNA ligase</fullName>
        <ecNumber evidence="1">6.1.1.3</ecNumber>
    </recommendedName>
    <alternativeName>
        <fullName evidence="1">Threonyl-tRNA synthetase</fullName>
        <shortName evidence="1">ThrRS</shortName>
    </alternativeName>
</protein>
<dbReference type="EC" id="6.1.1.3" evidence="1"/>
<dbReference type="EMBL" id="AE009439">
    <property type="protein sequence ID" value="AAM01759.1"/>
    <property type="molecule type" value="Genomic_DNA"/>
</dbReference>
<dbReference type="RefSeq" id="WP_011018914.1">
    <property type="nucleotide sequence ID" value="NC_003551.1"/>
</dbReference>
<dbReference type="SMR" id="Q8TXW5"/>
<dbReference type="FunCoup" id="Q8TXW5">
    <property type="interactions" value="144"/>
</dbReference>
<dbReference type="STRING" id="190192.MK0544"/>
<dbReference type="PaxDb" id="190192-MK0544"/>
<dbReference type="EnsemblBacteria" id="AAM01759">
    <property type="protein sequence ID" value="AAM01759"/>
    <property type="gene ID" value="MK0544"/>
</dbReference>
<dbReference type="GeneID" id="1476645"/>
<dbReference type="KEGG" id="mka:MK0544"/>
<dbReference type="PATRIC" id="fig|190192.8.peg.579"/>
<dbReference type="HOGENOM" id="CLU_029833_0_0_2"/>
<dbReference type="InParanoid" id="Q8TXW5"/>
<dbReference type="OrthoDB" id="372136at2157"/>
<dbReference type="Proteomes" id="UP000001826">
    <property type="component" value="Chromosome"/>
</dbReference>
<dbReference type="GO" id="GO:0005737">
    <property type="term" value="C:cytoplasm"/>
    <property type="evidence" value="ECO:0007669"/>
    <property type="project" value="UniProtKB-SubCell"/>
</dbReference>
<dbReference type="GO" id="GO:0005524">
    <property type="term" value="F:ATP binding"/>
    <property type="evidence" value="ECO:0007669"/>
    <property type="project" value="UniProtKB-UniRule"/>
</dbReference>
<dbReference type="GO" id="GO:0004829">
    <property type="term" value="F:threonine-tRNA ligase activity"/>
    <property type="evidence" value="ECO:0007669"/>
    <property type="project" value="UniProtKB-UniRule"/>
</dbReference>
<dbReference type="GO" id="GO:0000049">
    <property type="term" value="F:tRNA binding"/>
    <property type="evidence" value="ECO:0007669"/>
    <property type="project" value="UniProtKB-KW"/>
</dbReference>
<dbReference type="GO" id="GO:0008270">
    <property type="term" value="F:zinc ion binding"/>
    <property type="evidence" value="ECO:0007669"/>
    <property type="project" value="InterPro"/>
</dbReference>
<dbReference type="GO" id="GO:0006435">
    <property type="term" value="P:threonyl-tRNA aminoacylation"/>
    <property type="evidence" value="ECO:0007669"/>
    <property type="project" value="UniProtKB-UniRule"/>
</dbReference>
<dbReference type="CDD" id="cd00860">
    <property type="entry name" value="ThrRS_anticodon"/>
    <property type="match status" value="1"/>
</dbReference>
<dbReference type="CDD" id="cd00771">
    <property type="entry name" value="ThrRS_core"/>
    <property type="match status" value="1"/>
</dbReference>
<dbReference type="FunFam" id="3.40.50.800:FF:000001">
    <property type="entry name" value="Threonine--tRNA ligase"/>
    <property type="match status" value="1"/>
</dbReference>
<dbReference type="FunFam" id="3.50.80.10:FF:000004">
    <property type="entry name" value="Threonine--tRNA ligase"/>
    <property type="match status" value="1"/>
</dbReference>
<dbReference type="Gene3D" id="3.40.50.800">
    <property type="entry name" value="Anticodon-binding domain"/>
    <property type="match status" value="1"/>
</dbReference>
<dbReference type="Gene3D" id="3.30.930.10">
    <property type="entry name" value="Bira Bifunctional Protein, Domain 2"/>
    <property type="match status" value="1"/>
</dbReference>
<dbReference type="Gene3D" id="3.50.80.10">
    <property type="entry name" value="D-tyrosyl-tRNA(Tyr) deacylase"/>
    <property type="match status" value="1"/>
</dbReference>
<dbReference type="HAMAP" id="MF_00184">
    <property type="entry name" value="Thr_tRNA_synth"/>
    <property type="match status" value="1"/>
</dbReference>
<dbReference type="InterPro" id="IPR002314">
    <property type="entry name" value="aa-tRNA-synt_IIb"/>
</dbReference>
<dbReference type="InterPro" id="IPR006195">
    <property type="entry name" value="aa-tRNA-synth_II"/>
</dbReference>
<dbReference type="InterPro" id="IPR045864">
    <property type="entry name" value="aa-tRNA-synth_II/BPL/LPL"/>
</dbReference>
<dbReference type="InterPro" id="IPR004154">
    <property type="entry name" value="Anticodon-bd"/>
</dbReference>
<dbReference type="InterPro" id="IPR036621">
    <property type="entry name" value="Anticodon-bd_dom_sf"/>
</dbReference>
<dbReference type="InterPro" id="IPR023509">
    <property type="entry name" value="DTD-like_sf"/>
</dbReference>
<dbReference type="InterPro" id="IPR002320">
    <property type="entry name" value="Thr-tRNA-ligase_IIa"/>
</dbReference>
<dbReference type="InterPro" id="IPR015011">
    <property type="entry name" value="Threonyl-tRNA_syn_edit_dom_arc"/>
</dbReference>
<dbReference type="InterPro" id="IPR047246">
    <property type="entry name" value="ThrRS_anticodon"/>
</dbReference>
<dbReference type="InterPro" id="IPR033728">
    <property type="entry name" value="ThrRS_core"/>
</dbReference>
<dbReference type="NCBIfam" id="NF003068">
    <property type="entry name" value="PRK03991.1"/>
    <property type="match status" value="1"/>
</dbReference>
<dbReference type="NCBIfam" id="TIGR00418">
    <property type="entry name" value="thrS"/>
    <property type="match status" value="1"/>
</dbReference>
<dbReference type="PANTHER" id="PTHR11451:SF44">
    <property type="entry name" value="THREONINE--TRNA LIGASE, CHLOROPLASTIC_MITOCHONDRIAL 2"/>
    <property type="match status" value="1"/>
</dbReference>
<dbReference type="PANTHER" id="PTHR11451">
    <property type="entry name" value="THREONINE-TRNA LIGASE"/>
    <property type="match status" value="1"/>
</dbReference>
<dbReference type="Pfam" id="PF03129">
    <property type="entry name" value="HGTP_anticodon"/>
    <property type="match status" value="1"/>
</dbReference>
<dbReference type="Pfam" id="PF00587">
    <property type="entry name" value="tRNA-synt_2b"/>
    <property type="match status" value="1"/>
</dbReference>
<dbReference type="Pfam" id="PF08915">
    <property type="entry name" value="tRNA-Thr_ED"/>
    <property type="match status" value="1"/>
</dbReference>
<dbReference type="PRINTS" id="PR01047">
    <property type="entry name" value="TRNASYNTHTHR"/>
</dbReference>
<dbReference type="SUPFAM" id="SSF52954">
    <property type="entry name" value="Class II aaRS ABD-related"/>
    <property type="match status" value="1"/>
</dbReference>
<dbReference type="SUPFAM" id="SSF55681">
    <property type="entry name" value="Class II aaRS and biotin synthetases"/>
    <property type="match status" value="1"/>
</dbReference>
<dbReference type="PROSITE" id="PS50862">
    <property type="entry name" value="AA_TRNA_LIGASE_II"/>
    <property type="match status" value="1"/>
</dbReference>
<name>SYT_METKA</name>
<evidence type="ECO:0000255" key="1">
    <source>
        <dbReference type="HAMAP-Rule" id="MF_00184"/>
    </source>
</evidence>
<evidence type="ECO:0000256" key="2">
    <source>
        <dbReference type="SAM" id="MobiDB-lite"/>
    </source>
</evidence>
<gene>
    <name evidence="1" type="primary">thrS</name>
    <name type="ordered locus">MK0544</name>
</gene>
<reference key="1">
    <citation type="journal article" date="2002" name="Proc. Natl. Acad. Sci. U.S.A.">
        <title>The complete genome of hyperthermophile Methanopyrus kandleri AV19 and monophyly of archaeal methanogens.</title>
        <authorList>
            <person name="Slesarev A.I."/>
            <person name="Mezhevaya K.V."/>
            <person name="Makarova K.S."/>
            <person name="Polushin N.N."/>
            <person name="Shcherbinina O.V."/>
            <person name="Shakhova V.V."/>
            <person name="Belova G.I."/>
            <person name="Aravind L."/>
            <person name="Natale D.A."/>
            <person name="Rogozin I.B."/>
            <person name="Tatusov R.L."/>
            <person name="Wolf Y.I."/>
            <person name="Stetter K.O."/>
            <person name="Malykh A.G."/>
            <person name="Koonin E.V."/>
            <person name="Kozyavkin S.A."/>
        </authorList>
    </citation>
    <scope>NUCLEOTIDE SEQUENCE [LARGE SCALE GENOMIC DNA]</scope>
    <source>
        <strain>AV19 / DSM 6324 / JCM 9639 / NBRC 100938</strain>
    </source>
</reference>
<feature type="chain" id="PRO_0000101102" description="Threonine--tRNA ligase">
    <location>
        <begin position="1"/>
        <end position="624"/>
    </location>
</feature>
<feature type="region of interest" description="Editing domain" evidence="1">
    <location>
        <begin position="1"/>
        <end position="143"/>
    </location>
</feature>
<feature type="region of interest" description="Catalytic" evidence="1">
    <location>
        <begin position="197"/>
        <end position="499"/>
    </location>
</feature>
<feature type="region of interest" description="Disordered" evidence="2">
    <location>
        <begin position="598"/>
        <end position="624"/>
    </location>
</feature>
<feature type="binding site" evidence="1">
    <location>
        <position position="289"/>
    </location>
    <ligand>
        <name>Zn(2+)</name>
        <dbReference type="ChEBI" id="CHEBI:29105"/>
    </ligand>
</feature>
<feature type="binding site" evidence="1">
    <location>
        <position position="340"/>
    </location>
    <ligand>
        <name>Zn(2+)</name>
        <dbReference type="ChEBI" id="CHEBI:29105"/>
    </ligand>
</feature>
<feature type="binding site" evidence="1">
    <location>
        <position position="467"/>
    </location>
    <ligand>
        <name>Zn(2+)</name>
        <dbReference type="ChEBI" id="CHEBI:29105"/>
    </ligand>
</feature>
<comment type="function">
    <text evidence="1">Catalyzes the attachment of threonine to tRNA(Thr) in a two-step reaction: L-threonine is first activated by ATP to form Thr-AMP and then transferred to the acceptor end of tRNA(Thr). Also edits incorrectly charged L-seryl-tRNA(Thr).</text>
</comment>
<comment type="catalytic activity">
    <reaction evidence="1">
        <text>tRNA(Thr) + L-threonine + ATP = L-threonyl-tRNA(Thr) + AMP + diphosphate + H(+)</text>
        <dbReference type="Rhea" id="RHEA:24624"/>
        <dbReference type="Rhea" id="RHEA-COMP:9670"/>
        <dbReference type="Rhea" id="RHEA-COMP:9704"/>
        <dbReference type="ChEBI" id="CHEBI:15378"/>
        <dbReference type="ChEBI" id="CHEBI:30616"/>
        <dbReference type="ChEBI" id="CHEBI:33019"/>
        <dbReference type="ChEBI" id="CHEBI:57926"/>
        <dbReference type="ChEBI" id="CHEBI:78442"/>
        <dbReference type="ChEBI" id="CHEBI:78534"/>
        <dbReference type="ChEBI" id="CHEBI:456215"/>
        <dbReference type="EC" id="6.1.1.3"/>
    </reaction>
</comment>
<comment type="cofactor">
    <cofactor evidence="1">
        <name>Zn(2+)</name>
        <dbReference type="ChEBI" id="CHEBI:29105"/>
    </cofactor>
    <text evidence="1">Binds 1 zinc ion per subunit.</text>
</comment>
<comment type="subunit">
    <text evidence="1">Homodimer.</text>
</comment>
<comment type="subcellular location">
    <subcellularLocation>
        <location evidence="1">Cytoplasm</location>
    </subcellularLocation>
</comment>
<comment type="domain">
    <text evidence="1">The N-terminal domain is an archaea-specific tRNA-editing domain that hydrolyzes incorrectly charged L-seryl-tRNA(Thr). Catalysis of tRNA editing is performed by the charged tRNA itself.</text>
</comment>
<comment type="similarity">
    <text evidence="1">Belongs to the class-II aminoacyl-tRNA synthetase family.</text>
</comment>
<proteinExistence type="inferred from homology"/>